<keyword id="KW-0028">Amino-acid biosynthesis</keyword>
<keyword id="KW-0963">Cytoplasm</keyword>
<keyword id="KW-0368">Histidine biosynthesis</keyword>
<keyword id="KW-1185">Reference proteome</keyword>
<feature type="chain" id="PRO_1000095463" description="ATP phosphoribosyltransferase regulatory subunit">
    <location>
        <begin position="1"/>
        <end position="403"/>
    </location>
</feature>
<comment type="function">
    <text evidence="1">Required for the first step of histidine biosynthesis. May allow the feedback regulation of ATP phosphoribosyltransferase activity by histidine.</text>
</comment>
<comment type="pathway">
    <text evidence="1">Amino-acid biosynthesis; L-histidine biosynthesis; L-histidine from 5-phospho-alpha-D-ribose 1-diphosphate: step 1/9.</text>
</comment>
<comment type="subunit">
    <text evidence="1">Heteromultimer composed of HisG and HisZ subunits.</text>
</comment>
<comment type="subcellular location">
    <subcellularLocation>
        <location evidence="1">Cytoplasm</location>
    </subcellularLocation>
</comment>
<comment type="miscellaneous">
    <text>This function is generally fulfilled by the C-terminal part of HisG, which is missing in some bacteria such as this one.</text>
</comment>
<comment type="similarity">
    <text evidence="1">Belongs to the class-II aminoacyl-tRNA synthetase family. HisZ subfamily.</text>
</comment>
<accession>B2IWE2</accession>
<evidence type="ECO:0000255" key="1">
    <source>
        <dbReference type="HAMAP-Rule" id="MF_00125"/>
    </source>
</evidence>
<dbReference type="EMBL" id="CP001037">
    <property type="protein sequence ID" value="ACC79887.1"/>
    <property type="molecule type" value="Genomic_DNA"/>
</dbReference>
<dbReference type="RefSeq" id="WP_012407908.1">
    <property type="nucleotide sequence ID" value="NC_010628.1"/>
</dbReference>
<dbReference type="SMR" id="B2IWE2"/>
<dbReference type="STRING" id="63737.Npun_F1161"/>
<dbReference type="EnsemblBacteria" id="ACC79887">
    <property type="protein sequence ID" value="ACC79887"/>
    <property type="gene ID" value="Npun_F1161"/>
</dbReference>
<dbReference type="KEGG" id="npu:Npun_F1161"/>
<dbReference type="eggNOG" id="COG3705">
    <property type="taxonomic scope" value="Bacteria"/>
</dbReference>
<dbReference type="HOGENOM" id="CLU_025113_0_2_3"/>
<dbReference type="OrthoDB" id="9800814at2"/>
<dbReference type="PhylomeDB" id="B2IWE2"/>
<dbReference type="UniPathway" id="UPA00031">
    <property type="reaction ID" value="UER00006"/>
</dbReference>
<dbReference type="Proteomes" id="UP000001191">
    <property type="component" value="Chromosome"/>
</dbReference>
<dbReference type="GO" id="GO:0005737">
    <property type="term" value="C:cytoplasm"/>
    <property type="evidence" value="ECO:0007669"/>
    <property type="project" value="UniProtKB-SubCell"/>
</dbReference>
<dbReference type="GO" id="GO:0004821">
    <property type="term" value="F:histidine-tRNA ligase activity"/>
    <property type="evidence" value="ECO:0007669"/>
    <property type="project" value="TreeGrafter"/>
</dbReference>
<dbReference type="GO" id="GO:0006427">
    <property type="term" value="P:histidyl-tRNA aminoacylation"/>
    <property type="evidence" value="ECO:0007669"/>
    <property type="project" value="TreeGrafter"/>
</dbReference>
<dbReference type="GO" id="GO:0000105">
    <property type="term" value="P:L-histidine biosynthetic process"/>
    <property type="evidence" value="ECO:0007669"/>
    <property type="project" value="UniProtKB-UniRule"/>
</dbReference>
<dbReference type="CDD" id="cd00773">
    <property type="entry name" value="HisRS-like_core"/>
    <property type="match status" value="1"/>
</dbReference>
<dbReference type="Gene3D" id="3.30.930.10">
    <property type="entry name" value="Bira Bifunctional Protein, Domain 2"/>
    <property type="match status" value="1"/>
</dbReference>
<dbReference type="HAMAP" id="MF_00125">
    <property type="entry name" value="HisZ"/>
    <property type="match status" value="1"/>
</dbReference>
<dbReference type="InterPro" id="IPR006195">
    <property type="entry name" value="aa-tRNA-synth_II"/>
</dbReference>
<dbReference type="InterPro" id="IPR045864">
    <property type="entry name" value="aa-tRNA-synth_II/BPL/LPL"/>
</dbReference>
<dbReference type="InterPro" id="IPR041715">
    <property type="entry name" value="HisRS-like_core"/>
</dbReference>
<dbReference type="InterPro" id="IPR004516">
    <property type="entry name" value="HisRS/HisZ"/>
</dbReference>
<dbReference type="InterPro" id="IPR004517">
    <property type="entry name" value="HisZ"/>
</dbReference>
<dbReference type="NCBIfam" id="TIGR00443">
    <property type="entry name" value="hisZ_biosyn_reg"/>
    <property type="match status" value="1"/>
</dbReference>
<dbReference type="NCBIfam" id="NF008940">
    <property type="entry name" value="PRK12292.2-3"/>
    <property type="match status" value="1"/>
</dbReference>
<dbReference type="PANTHER" id="PTHR43707:SF1">
    <property type="entry name" value="HISTIDINE--TRNA LIGASE, MITOCHONDRIAL-RELATED"/>
    <property type="match status" value="1"/>
</dbReference>
<dbReference type="PANTHER" id="PTHR43707">
    <property type="entry name" value="HISTIDYL-TRNA SYNTHETASE"/>
    <property type="match status" value="1"/>
</dbReference>
<dbReference type="Pfam" id="PF13393">
    <property type="entry name" value="tRNA-synt_His"/>
    <property type="match status" value="1"/>
</dbReference>
<dbReference type="PIRSF" id="PIRSF001549">
    <property type="entry name" value="His-tRNA_synth"/>
    <property type="match status" value="1"/>
</dbReference>
<dbReference type="SUPFAM" id="SSF55681">
    <property type="entry name" value="Class II aaRS and biotin synthetases"/>
    <property type="match status" value="1"/>
</dbReference>
<dbReference type="PROSITE" id="PS50862">
    <property type="entry name" value="AA_TRNA_LIGASE_II"/>
    <property type="match status" value="1"/>
</dbReference>
<gene>
    <name evidence="1" type="primary">hisZ</name>
    <name type="ordered locus">Npun_F1161</name>
</gene>
<organism>
    <name type="scientific">Nostoc punctiforme (strain ATCC 29133 / PCC 73102)</name>
    <dbReference type="NCBI Taxonomy" id="63737"/>
    <lineage>
        <taxon>Bacteria</taxon>
        <taxon>Bacillati</taxon>
        <taxon>Cyanobacteriota</taxon>
        <taxon>Cyanophyceae</taxon>
        <taxon>Nostocales</taxon>
        <taxon>Nostocaceae</taxon>
        <taxon>Nostoc</taxon>
    </lineage>
</organism>
<name>HISZ_NOSP7</name>
<sequence>MVYQPASGARDLLPLDVEKKRWIEDRLQQVFHRWGYHRIITSTLERMDTLMAGEAIQRQMVIQLQNGEDDELGLRPELTASIARTVVTRMANATYPQRLYYNANVFRRTWESRHNRQQEFYQAGVELLGAGGLLANAEVLLLVADCLAALGLRQWHLILGEAGITRSLLSAFPANLQDKVRSAIAHLDRITIDTLPLSDKLRDRAQIIMDLRGPSADVLQKVSSLDLDEEQREAVNNLKSLVELLESEKKFPLILDLSLIQTIDYYTGIVFEVVNDTESQARVLGRGGRYDQLLGLYHPQRENIPGIGFGLSIEDLYQVLLSTQQLPQVTPASNYLVVPETGSANAAAFAYAQKLRDSTDLVRVEIDLGGRDAEAIRQYARDRSIAQIAWIKADSSPKIESLR</sequence>
<reference key="1">
    <citation type="journal article" date="2013" name="Plant Physiol.">
        <title>A Nostoc punctiforme Sugar Transporter Necessary to Establish a Cyanobacterium-Plant Symbiosis.</title>
        <authorList>
            <person name="Ekman M."/>
            <person name="Picossi S."/>
            <person name="Campbell E.L."/>
            <person name="Meeks J.C."/>
            <person name="Flores E."/>
        </authorList>
    </citation>
    <scope>NUCLEOTIDE SEQUENCE [LARGE SCALE GENOMIC DNA]</scope>
    <source>
        <strain>ATCC 29133 / PCC 73102</strain>
    </source>
</reference>
<protein>
    <recommendedName>
        <fullName evidence="1">ATP phosphoribosyltransferase regulatory subunit</fullName>
    </recommendedName>
</protein>
<proteinExistence type="inferred from homology"/>